<sequence>MAERPLDVIHKSLDKDVLVLLKRGNEFRGKLIGYDIHLNVVLADAELIQDGEVVKKYGKIVIRGDNVLALSPVELE</sequence>
<feature type="chain" id="PRO_0000125599" description="Putative snRNP Sm-like protein">
    <location>
        <begin position="1"/>
        <end position="76"/>
    </location>
</feature>
<feature type="domain" description="Sm" evidence="2">
    <location>
        <begin position="4"/>
        <end position="76"/>
    </location>
</feature>
<reference key="1">
    <citation type="journal article" date="2005" name="Genome Res.">
        <title>Complete genome sequence of the hyperthermophilic archaeon Thermococcus kodakaraensis KOD1 and comparison with Pyrococcus genomes.</title>
        <authorList>
            <person name="Fukui T."/>
            <person name="Atomi H."/>
            <person name="Kanai T."/>
            <person name="Matsumi R."/>
            <person name="Fujiwara S."/>
            <person name="Imanaka T."/>
        </authorList>
    </citation>
    <scope>NUCLEOTIDE SEQUENCE [LARGE SCALE GENOMIC DNA]</scope>
    <source>
        <strain>ATCC BAA-918 / JCM 12380 / KOD1</strain>
    </source>
</reference>
<comment type="similarity">
    <text evidence="1">Belongs to the snRNP Sm proteins family.</text>
</comment>
<gene>
    <name type="ordered locus">TK0976</name>
</gene>
<dbReference type="EMBL" id="AP006878">
    <property type="protein sequence ID" value="BAD85165.1"/>
    <property type="molecule type" value="Genomic_DNA"/>
</dbReference>
<dbReference type="RefSeq" id="WP_011249927.1">
    <property type="nucleotide sequence ID" value="NC_006624.1"/>
</dbReference>
<dbReference type="SMR" id="Q5JIE0"/>
<dbReference type="STRING" id="69014.TK0976"/>
<dbReference type="EnsemblBacteria" id="BAD85165">
    <property type="protein sequence ID" value="BAD85165"/>
    <property type="gene ID" value="TK0976"/>
</dbReference>
<dbReference type="GeneID" id="78447489"/>
<dbReference type="KEGG" id="tko:TK0976"/>
<dbReference type="PATRIC" id="fig|69014.16.peg.954"/>
<dbReference type="eggNOG" id="arCOG00998">
    <property type="taxonomic scope" value="Archaea"/>
</dbReference>
<dbReference type="HOGENOM" id="CLU_076902_11_1_2"/>
<dbReference type="InParanoid" id="Q5JIE0"/>
<dbReference type="OrthoDB" id="371816at2157"/>
<dbReference type="PhylomeDB" id="Q5JIE0"/>
<dbReference type="Proteomes" id="UP000000536">
    <property type="component" value="Chromosome"/>
</dbReference>
<dbReference type="GO" id="GO:1990904">
    <property type="term" value="C:ribonucleoprotein complex"/>
    <property type="evidence" value="ECO:0000318"/>
    <property type="project" value="GO_Central"/>
</dbReference>
<dbReference type="GO" id="GO:0120114">
    <property type="term" value="C:Sm-like protein family complex"/>
    <property type="evidence" value="ECO:0007669"/>
    <property type="project" value="UniProtKB-ARBA"/>
</dbReference>
<dbReference type="GO" id="GO:0003723">
    <property type="term" value="F:RNA binding"/>
    <property type="evidence" value="ECO:0007669"/>
    <property type="project" value="InterPro"/>
</dbReference>
<dbReference type="GO" id="GO:0000398">
    <property type="term" value="P:mRNA splicing, via spliceosome"/>
    <property type="evidence" value="ECO:0007669"/>
    <property type="project" value="InterPro"/>
</dbReference>
<dbReference type="CDD" id="cd01731">
    <property type="entry name" value="archaeal_Sm1"/>
    <property type="match status" value="1"/>
</dbReference>
<dbReference type="Gene3D" id="2.30.30.100">
    <property type="match status" value="1"/>
</dbReference>
<dbReference type="HAMAP" id="MF_00257">
    <property type="entry name" value="Lsm_RuxX"/>
    <property type="match status" value="1"/>
</dbReference>
<dbReference type="InterPro" id="IPR016487">
    <property type="entry name" value="Lsm6/sSmF"/>
</dbReference>
<dbReference type="InterPro" id="IPR010920">
    <property type="entry name" value="LSM_dom_sf"/>
</dbReference>
<dbReference type="InterPro" id="IPR047575">
    <property type="entry name" value="Sm"/>
</dbReference>
<dbReference type="InterPro" id="IPR001163">
    <property type="entry name" value="Sm_dom_euk/arc"/>
</dbReference>
<dbReference type="InterPro" id="IPR022901">
    <property type="entry name" value="snRNP_Sm-like_arc"/>
</dbReference>
<dbReference type="NCBIfam" id="NF001963">
    <property type="entry name" value="PRK00737.1"/>
    <property type="match status" value="1"/>
</dbReference>
<dbReference type="PANTHER" id="PTHR11021:SF0">
    <property type="entry name" value="SMALL NUCLEAR RIBONUCLEOPROTEIN F"/>
    <property type="match status" value="1"/>
</dbReference>
<dbReference type="PANTHER" id="PTHR11021">
    <property type="entry name" value="SMALL NUCLEAR RIBONUCLEOPROTEIN F SNRNP-F"/>
    <property type="match status" value="1"/>
</dbReference>
<dbReference type="Pfam" id="PF01423">
    <property type="entry name" value="LSM"/>
    <property type="match status" value="1"/>
</dbReference>
<dbReference type="SMART" id="SM00651">
    <property type="entry name" value="Sm"/>
    <property type="match status" value="1"/>
</dbReference>
<dbReference type="SUPFAM" id="SSF50182">
    <property type="entry name" value="Sm-like ribonucleoproteins"/>
    <property type="match status" value="1"/>
</dbReference>
<dbReference type="PROSITE" id="PS52002">
    <property type="entry name" value="SM"/>
    <property type="match status" value="1"/>
</dbReference>
<proteinExistence type="inferred from homology"/>
<organism>
    <name type="scientific">Thermococcus kodakarensis (strain ATCC BAA-918 / JCM 12380 / KOD1)</name>
    <name type="common">Pyrococcus kodakaraensis (strain KOD1)</name>
    <dbReference type="NCBI Taxonomy" id="69014"/>
    <lineage>
        <taxon>Archaea</taxon>
        <taxon>Methanobacteriati</taxon>
        <taxon>Methanobacteriota</taxon>
        <taxon>Thermococci</taxon>
        <taxon>Thermococcales</taxon>
        <taxon>Thermococcaceae</taxon>
        <taxon>Thermococcus</taxon>
    </lineage>
</organism>
<name>RUXX_THEKO</name>
<accession>Q5JIE0</accession>
<keyword id="KW-1185">Reference proteome</keyword>
<keyword id="KW-0687">Ribonucleoprotein</keyword>
<protein>
    <recommendedName>
        <fullName evidence="1">Putative snRNP Sm-like protein</fullName>
    </recommendedName>
</protein>
<evidence type="ECO:0000255" key="1">
    <source>
        <dbReference type="HAMAP-Rule" id="MF_00257"/>
    </source>
</evidence>
<evidence type="ECO:0000255" key="2">
    <source>
        <dbReference type="PROSITE-ProRule" id="PRU01346"/>
    </source>
</evidence>